<accession>Q0SNH0</accession>
<accession>G0IRQ8</accession>
<protein>
    <recommendedName>
        <fullName evidence="1">Glutamyl-tRNA(Gln) amidotransferase subunit A</fullName>
        <shortName evidence="1">Glu-ADT subunit A</shortName>
        <ecNumber evidence="1">6.3.5.7</ecNumber>
    </recommendedName>
</protein>
<keyword id="KW-0067">ATP-binding</keyword>
<keyword id="KW-0436">Ligase</keyword>
<keyword id="KW-0547">Nucleotide-binding</keyword>
<keyword id="KW-0648">Protein biosynthesis</keyword>
<feature type="chain" id="PRO_1000015801" description="Glutamyl-tRNA(Gln) amidotransferase subunit A">
    <location>
        <begin position="1"/>
        <end position="481"/>
    </location>
</feature>
<feature type="active site" description="Charge relay system" evidence="1">
    <location>
        <position position="78"/>
    </location>
</feature>
<feature type="active site" description="Charge relay system" evidence="1">
    <location>
        <position position="153"/>
    </location>
</feature>
<feature type="active site" description="Acyl-ester intermediate" evidence="1">
    <location>
        <position position="177"/>
    </location>
</feature>
<sequence length="481" mass="53584">MDLSNLTLTKIQELVLTKKCKIYDILLAYKNNYELNKDINGYIEFFDDSLEIAKRYDDFLRNCELEDLPLIGMLIAVKDNISIQDKSLTCASEILKGYISPYDATVIKRLKNKGAILIGRTNMDEFAMGSTCEFSYYGATLNPLNREYVIGGSSGGSAAVVAAFQAPFSLGSDTGGSVRLPASFSGILGFKPSYGGLSRYGLASYASSFDQIGFFAHSIEDIALILKHTCGADKMDSTSVDIFDDFYPLKIESLQGKNLAVIKELGEDLMDKNVASSFAKFKFDLLSKGINIKEVSIEEINFILSIYYTISPVEASSNLARYTGLCYGKRMSENLSLNDFYFKHRSNFLSEEVKRRIVLGNYLLSEGYDSKYYSKACEILQNLIIPKFNKLFESCDFIITPTSFVKPFRAGLDFDDPVKMYYSDICTVIANLIGAPAISLPYSKDKEGLSIGMQIIGRSKKDFELLSFSKNVIRELGLNGI</sequence>
<name>GATA_BORAP</name>
<organism>
    <name type="scientific">Borreliella afzelii (strain PKo)</name>
    <name type="common">Borrelia afzelii</name>
    <dbReference type="NCBI Taxonomy" id="390236"/>
    <lineage>
        <taxon>Bacteria</taxon>
        <taxon>Pseudomonadati</taxon>
        <taxon>Spirochaetota</taxon>
        <taxon>Spirochaetia</taxon>
        <taxon>Spirochaetales</taxon>
        <taxon>Borreliaceae</taxon>
        <taxon>Borreliella</taxon>
    </lineage>
</organism>
<proteinExistence type="inferred from homology"/>
<reference key="1">
    <citation type="journal article" date="2006" name="BMC Genomics">
        <title>Comparative genome analysis: selection pressure on the Borrelia vls cassettes is essential for infectivity.</title>
        <authorList>
            <person name="Gloeckner G."/>
            <person name="Schulte-Spechtel U."/>
            <person name="Schilhabel M."/>
            <person name="Felder M."/>
            <person name="Suehnel J."/>
            <person name="Wilske B."/>
            <person name="Platzer M."/>
        </authorList>
    </citation>
    <scope>NUCLEOTIDE SEQUENCE [LARGE SCALE GENOMIC DNA]</scope>
    <source>
        <strain>PKo</strain>
    </source>
</reference>
<reference key="2">
    <citation type="journal article" date="2011" name="J. Bacteriol.">
        <title>Whole-genome sequences of two Borrelia afzelii and two Borrelia garinii Lyme disease agent isolates.</title>
        <authorList>
            <person name="Casjens S.R."/>
            <person name="Mongodin E.F."/>
            <person name="Qiu W.G."/>
            <person name="Dunn J.J."/>
            <person name="Luft B.J."/>
            <person name="Fraser-Liggett C.M."/>
            <person name="Schutzer S.E."/>
        </authorList>
    </citation>
    <scope>NUCLEOTIDE SEQUENCE [LARGE SCALE GENOMIC DNA]</scope>
    <source>
        <strain>PKo</strain>
    </source>
</reference>
<gene>
    <name evidence="1" type="primary">gatA</name>
    <name type="ordered locus">BAPKO_0351</name>
    <name type="ordered locus">BafPKo_0342</name>
</gene>
<evidence type="ECO:0000255" key="1">
    <source>
        <dbReference type="HAMAP-Rule" id="MF_00120"/>
    </source>
</evidence>
<comment type="function">
    <text evidence="1">Allows the formation of correctly charged Gln-tRNA(Gln) through the transamidation of misacylated Glu-tRNA(Gln) in organisms which lack glutaminyl-tRNA synthetase. The reaction takes place in the presence of glutamine and ATP through an activated gamma-phospho-Glu-tRNA(Gln).</text>
</comment>
<comment type="catalytic activity">
    <reaction evidence="1">
        <text>L-glutamyl-tRNA(Gln) + L-glutamine + ATP + H2O = L-glutaminyl-tRNA(Gln) + L-glutamate + ADP + phosphate + H(+)</text>
        <dbReference type="Rhea" id="RHEA:17521"/>
        <dbReference type="Rhea" id="RHEA-COMP:9681"/>
        <dbReference type="Rhea" id="RHEA-COMP:9684"/>
        <dbReference type="ChEBI" id="CHEBI:15377"/>
        <dbReference type="ChEBI" id="CHEBI:15378"/>
        <dbReference type="ChEBI" id="CHEBI:29985"/>
        <dbReference type="ChEBI" id="CHEBI:30616"/>
        <dbReference type="ChEBI" id="CHEBI:43474"/>
        <dbReference type="ChEBI" id="CHEBI:58359"/>
        <dbReference type="ChEBI" id="CHEBI:78520"/>
        <dbReference type="ChEBI" id="CHEBI:78521"/>
        <dbReference type="ChEBI" id="CHEBI:456216"/>
        <dbReference type="EC" id="6.3.5.7"/>
    </reaction>
</comment>
<comment type="subunit">
    <text evidence="1">Heterotrimer of A, B and C subunits.</text>
</comment>
<comment type="similarity">
    <text evidence="1">Belongs to the amidase family. GatA subfamily.</text>
</comment>
<dbReference type="EC" id="6.3.5.7" evidence="1"/>
<dbReference type="EMBL" id="CP000395">
    <property type="protein sequence ID" value="ABH01608.1"/>
    <property type="molecule type" value="Genomic_DNA"/>
</dbReference>
<dbReference type="EMBL" id="CP002933">
    <property type="protein sequence ID" value="AEL69568.1"/>
    <property type="molecule type" value="Genomic_DNA"/>
</dbReference>
<dbReference type="RefSeq" id="WP_011600964.1">
    <property type="nucleotide sequence ID" value="NC_008277.1"/>
</dbReference>
<dbReference type="SMR" id="Q0SNH0"/>
<dbReference type="STRING" id="29518.BLA32_02600"/>
<dbReference type="KEGG" id="baf:BAPKO_0351"/>
<dbReference type="KEGG" id="bafz:BafPKo_0342"/>
<dbReference type="PATRIC" id="fig|390236.22.peg.335"/>
<dbReference type="eggNOG" id="COG0154">
    <property type="taxonomic scope" value="Bacteria"/>
</dbReference>
<dbReference type="HOGENOM" id="CLU_009600_0_3_12"/>
<dbReference type="OrthoDB" id="9811471at2"/>
<dbReference type="Proteomes" id="UP000005216">
    <property type="component" value="Chromosome"/>
</dbReference>
<dbReference type="GO" id="GO:0030956">
    <property type="term" value="C:glutamyl-tRNA(Gln) amidotransferase complex"/>
    <property type="evidence" value="ECO:0007669"/>
    <property type="project" value="InterPro"/>
</dbReference>
<dbReference type="GO" id="GO:0005524">
    <property type="term" value="F:ATP binding"/>
    <property type="evidence" value="ECO:0007669"/>
    <property type="project" value="UniProtKB-KW"/>
</dbReference>
<dbReference type="GO" id="GO:0050567">
    <property type="term" value="F:glutaminyl-tRNA synthase (glutamine-hydrolyzing) activity"/>
    <property type="evidence" value="ECO:0007669"/>
    <property type="project" value="UniProtKB-UniRule"/>
</dbReference>
<dbReference type="GO" id="GO:0006412">
    <property type="term" value="P:translation"/>
    <property type="evidence" value="ECO:0007669"/>
    <property type="project" value="UniProtKB-UniRule"/>
</dbReference>
<dbReference type="Gene3D" id="3.90.1300.10">
    <property type="entry name" value="Amidase signature (AS) domain"/>
    <property type="match status" value="1"/>
</dbReference>
<dbReference type="HAMAP" id="MF_00120">
    <property type="entry name" value="GatA"/>
    <property type="match status" value="1"/>
</dbReference>
<dbReference type="InterPro" id="IPR000120">
    <property type="entry name" value="Amidase"/>
</dbReference>
<dbReference type="InterPro" id="IPR020556">
    <property type="entry name" value="Amidase_CS"/>
</dbReference>
<dbReference type="InterPro" id="IPR023631">
    <property type="entry name" value="Amidase_dom"/>
</dbReference>
<dbReference type="InterPro" id="IPR036928">
    <property type="entry name" value="AS_sf"/>
</dbReference>
<dbReference type="InterPro" id="IPR004412">
    <property type="entry name" value="GatA"/>
</dbReference>
<dbReference type="NCBIfam" id="TIGR00132">
    <property type="entry name" value="gatA"/>
    <property type="match status" value="1"/>
</dbReference>
<dbReference type="PANTHER" id="PTHR11895:SF151">
    <property type="entry name" value="GLUTAMYL-TRNA(GLN) AMIDOTRANSFERASE SUBUNIT A"/>
    <property type="match status" value="1"/>
</dbReference>
<dbReference type="PANTHER" id="PTHR11895">
    <property type="entry name" value="TRANSAMIDASE"/>
    <property type="match status" value="1"/>
</dbReference>
<dbReference type="Pfam" id="PF01425">
    <property type="entry name" value="Amidase"/>
    <property type="match status" value="1"/>
</dbReference>
<dbReference type="SUPFAM" id="SSF75304">
    <property type="entry name" value="Amidase signature (AS) enzymes"/>
    <property type="match status" value="1"/>
</dbReference>
<dbReference type="PROSITE" id="PS00571">
    <property type="entry name" value="AMIDASES"/>
    <property type="match status" value="1"/>
</dbReference>